<dbReference type="EC" id="2.4.1.15" evidence="1"/>
<dbReference type="EMBL" id="AL391737">
    <property type="protein sequence ID" value="CAD24950.1"/>
    <property type="molecule type" value="Genomic_DNA"/>
</dbReference>
<dbReference type="RefSeq" id="XP_965915.1">
    <property type="nucleotide sequence ID" value="XM_960822.1"/>
</dbReference>
<dbReference type="SMR" id="Q8SSL2"/>
<dbReference type="FunCoup" id="Q8SSL2">
    <property type="interactions" value="19"/>
</dbReference>
<dbReference type="STRING" id="284813.Q8SSL2"/>
<dbReference type="CAZy" id="GT20">
    <property type="family name" value="Glycosyltransferase Family 20"/>
</dbReference>
<dbReference type="VEuPathDB" id="MicrosporidiaDB:ECU01_0800"/>
<dbReference type="HOGENOM" id="CLU_002351_7_2_1"/>
<dbReference type="InParanoid" id="Q8SSL2"/>
<dbReference type="OMA" id="NRTIWPL"/>
<dbReference type="OrthoDB" id="755951at2759"/>
<dbReference type="Proteomes" id="UP000000819">
    <property type="component" value="Chromosome I"/>
</dbReference>
<dbReference type="GO" id="GO:0005829">
    <property type="term" value="C:cytosol"/>
    <property type="evidence" value="ECO:0007669"/>
    <property type="project" value="TreeGrafter"/>
</dbReference>
<dbReference type="GO" id="GO:0003825">
    <property type="term" value="F:alpha,alpha-trehalose-phosphate synthase (UDP-forming) activity"/>
    <property type="evidence" value="ECO:0007669"/>
    <property type="project" value="UniProtKB-EC"/>
</dbReference>
<dbReference type="GO" id="GO:0004805">
    <property type="term" value="F:trehalose-phosphatase activity"/>
    <property type="evidence" value="ECO:0007669"/>
    <property type="project" value="TreeGrafter"/>
</dbReference>
<dbReference type="GO" id="GO:0005992">
    <property type="term" value="P:trehalose biosynthetic process"/>
    <property type="evidence" value="ECO:0007669"/>
    <property type="project" value="InterPro"/>
</dbReference>
<dbReference type="CDD" id="cd03788">
    <property type="entry name" value="GT20_TPS"/>
    <property type="match status" value="1"/>
</dbReference>
<dbReference type="FunFam" id="3.40.50.2000:FF:000010">
    <property type="entry name" value="Alpha,alpha-trehalose-phosphate synthase"/>
    <property type="match status" value="1"/>
</dbReference>
<dbReference type="Gene3D" id="3.40.50.2000">
    <property type="entry name" value="Glycogen Phosphorylase B"/>
    <property type="match status" value="2"/>
</dbReference>
<dbReference type="InterPro" id="IPR001830">
    <property type="entry name" value="Glyco_trans_20"/>
</dbReference>
<dbReference type="PANTHER" id="PTHR10788:SF106">
    <property type="entry name" value="BCDNA.GH08860"/>
    <property type="match status" value="1"/>
</dbReference>
<dbReference type="PANTHER" id="PTHR10788">
    <property type="entry name" value="TREHALOSE-6-PHOSPHATE SYNTHASE"/>
    <property type="match status" value="1"/>
</dbReference>
<dbReference type="Pfam" id="PF00982">
    <property type="entry name" value="Glyco_transf_20"/>
    <property type="match status" value="1"/>
</dbReference>
<dbReference type="SUPFAM" id="SSF53756">
    <property type="entry name" value="UDP-Glycosyltransferase/glycogen phosphorylase"/>
    <property type="match status" value="1"/>
</dbReference>
<comment type="function">
    <text evidence="1">Synthase catalytic subunit of the trehalose synthase complex that catalyzes the production of trehalose from glucose-6-phosphate and UDP-alpha-D-glucose in a two step process. Can function independently of the complex (By similarity).</text>
</comment>
<comment type="catalytic activity">
    <reaction evidence="1">
        <text>D-glucose 6-phosphate + UDP-alpha-D-glucose = alpha,alpha-trehalose 6-phosphate + UDP + H(+)</text>
        <dbReference type="Rhea" id="RHEA:18889"/>
        <dbReference type="ChEBI" id="CHEBI:15378"/>
        <dbReference type="ChEBI" id="CHEBI:58223"/>
        <dbReference type="ChEBI" id="CHEBI:58429"/>
        <dbReference type="ChEBI" id="CHEBI:58885"/>
        <dbReference type="ChEBI" id="CHEBI:61548"/>
        <dbReference type="EC" id="2.4.1.15"/>
    </reaction>
</comment>
<comment type="subunit">
    <text evidence="1">Component of the trehalose synthase complex.</text>
</comment>
<comment type="subcellular location">
    <subcellularLocation>
        <location evidence="1">Cytoplasm</location>
    </subcellularLocation>
</comment>
<comment type="developmental stage">
    <text evidence="3">Expressed in late sporogonial stages.</text>
</comment>
<comment type="similarity">
    <text evidence="4">Belongs to the glycosyltransferase 20 family.</text>
</comment>
<proteinExistence type="evidence at protein level"/>
<evidence type="ECO:0000250" key="1">
    <source>
        <dbReference type="UniProtKB" id="Q00764"/>
    </source>
</evidence>
<evidence type="ECO:0000250" key="2">
    <source>
        <dbReference type="UniProtKB" id="Q92410"/>
    </source>
</evidence>
<evidence type="ECO:0000269" key="3">
    <source>
    </source>
</evidence>
<evidence type="ECO:0000305" key="4"/>
<protein>
    <recommendedName>
        <fullName>Alpha,alpha-trehalose-phosphate synthase [UDP-forming]</fullName>
        <ecNumber evidence="1">2.4.1.15</ecNumber>
    </recommendedName>
    <alternativeName>
        <fullName>General glucose sensor subunit 1</fullName>
    </alternativeName>
    <alternativeName>
        <fullName>Trehalose synthase complex catalytic subunit TPS1</fullName>
    </alternativeName>
    <alternativeName>
        <fullName>Trehalose-6-phosphate synthase</fullName>
    </alternativeName>
    <alternativeName>
        <fullName>UDP-glucose-glucosephosphate glucosyltransferase</fullName>
    </alternativeName>
</protein>
<name>TPS1_ENCCU</name>
<sequence length="459" mass="52575">MKLLVVSNRLPLTVKKSKDGFEYTKTSGGLVTGLRGISDKIRFMWLGNISGVELDEEEKKVIRKDCWEKFHSIPVFIDPVLNSNSYDGFCNAILWPIIHSFKDDVAFTIKDYNAYVEYNTIFCEEICKIVEDGDIVWVHDYHLMILPEMLRKKSDKSFKIMFFLHAQFPPAEIMETLACRREIVSGMAHSDLIAFHSFDYAINFDDTCRANKVEVRSKLDAIPIGIDPAMFRSALKEEKTVERIKELREMFRGRKILLGVDRTDYIKGMPHRVKGFQRFLEKHPEFLDNVVFLQVGVPSRTSVKEYSSYITKMNELVSETNSKFGSIESVHLYFLNKSVDFNELCALYAVSDMLLVTSLQDGMNLVALEYISCQNENNGVLLLSSNAGASTTLPAAVEVNSWNTEEIADGIHRAITMSLEERTERHEINRKAVDTFTSVEWAEKNLDGLCDDWRESLML</sequence>
<reference key="1">
    <citation type="journal article" date="2001" name="Genome Res.">
        <title>Sequence and analysis of chromosome I of the amitochondriate intracellular parasite Encephalitozoon cuniculi (Microspora).</title>
        <authorList>
            <person name="Peyret P."/>
            <person name="Katinka M.D."/>
            <person name="Duprat S."/>
            <person name="Duffieux F."/>
            <person name="Barbe V."/>
            <person name="Barbazanges M."/>
            <person name="Weissenbach J."/>
            <person name="Saurin W."/>
            <person name="Vivares C.P."/>
        </authorList>
    </citation>
    <scope>NUCLEOTIDE SEQUENCE [LARGE SCALE GENOMIC DNA]</scope>
    <source>
        <strain>GB-M1</strain>
    </source>
</reference>
<reference key="2">
    <citation type="journal article" date="2001" name="Nature">
        <title>Genome sequence and gene compaction of the eukaryote parasite Encephalitozoon cuniculi.</title>
        <authorList>
            <person name="Katinka M.D."/>
            <person name="Duprat S."/>
            <person name="Cornillot E."/>
            <person name="Metenier G."/>
            <person name="Thomarat F."/>
            <person name="Prensier G."/>
            <person name="Barbe V."/>
            <person name="Peyretaillade E."/>
            <person name="Brottier P."/>
            <person name="Wincker P."/>
            <person name="Delbac F."/>
            <person name="El Alaoui H."/>
            <person name="Peyret P."/>
            <person name="Saurin W."/>
            <person name="Gouy M."/>
            <person name="Weissenbach J."/>
            <person name="Vivares C.P."/>
        </authorList>
    </citation>
    <scope>NUCLEOTIDE SEQUENCE [LARGE SCALE GENOMIC DNA]</scope>
    <source>
        <strain>GB-M1</strain>
    </source>
</reference>
<reference key="3">
    <citation type="journal article" date="2006" name="Proteomics">
        <title>Proteomic analysis of the eukaryotic parasite Encephalitozoon cuniculi (microsporidia): a reference map for proteins expressed in late sporogonial stages.</title>
        <authorList>
            <person name="Brosson D."/>
            <person name="Kuhn L."/>
            <person name="Delbac F."/>
            <person name="Garin J."/>
            <person name="Vivares C.P."/>
            <person name="Texier C."/>
        </authorList>
    </citation>
    <scope>IDENTIFICATION BY MASS SPECTROMETRY [LARGE SCALE ANALYSIS]</scope>
    <scope>DEVELOPMENTAL STAGE</scope>
</reference>
<gene>
    <name type="primary">TPS1</name>
    <name type="ordered locus">ECU01_0800</name>
</gene>
<keyword id="KW-0963">Cytoplasm</keyword>
<keyword id="KW-0328">Glycosyltransferase</keyword>
<keyword id="KW-1185">Reference proteome</keyword>
<keyword id="KW-0346">Stress response</keyword>
<keyword id="KW-0808">Transferase</keyword>
<organism>
    <name type="scientific">Encephalitozoon cuniculi (strain GB-M1)</name>
    <name type="common">Microsporidian parasite</name>
    <dbReference type="NCBI Taxonomy" id="284813"/>
    <lineage>
        <taxon>Eukaryota</taxon>
        <taxon>Fungi</taxon>
        <taxon>Fungi incertae sedis</taxon>
        <taxon>Microsporidia</taxon>
        <taxon>Unikaryonidae</taxon>
        <taxon>Encephalitozoon</taxon>
    </lineage>
</organism>
<feature type="chain" id="PRO_0000381753" description="Alpha,alpha-trehalose-phosphate synthase [UDP-forming]">
    <location>
        <begin position="1"/>
        <end position="459"/>
    </location>
</feature>
<feature type="binding site" evidence="2">
    <location>
        <position position="86"/>
    </location>
    <ligand>
        <name>D-glucose 6-phosphate</name>
        <dbReference type="ChEBI" id="CHEBI:61548"/>
    </ligand>
</feature>
<feature type="binding site" evidence="2">
    <location>
        <position position="140"/>
    </location>
    <ligand>
        <name>D-glucose 6-phosphate</name>
        <dbReference type="ChEBI" id="CHEBI:61548"/>
    </ligand>
</feature>
<feature type="binding site" evidence="2">
    <location>
        <position position="262"/>
    </location>
    <ligand>
        <name>UDP</name>
        <dbReference type="ChEBI" id="CHEBI:58223"/>
    </ligand>
</feature>
<feature type="binding site" evidence="2">
    <location>
        <position position="262"/>
    </location>
    <ligand>
        <name>UDP-alpha-D-glucose</name>
        <dbReference type="ChEBI" id="CHEBI:58885"/>
    </ligand>
</feature>
<feature type="binding site" evidence="2">
    <location>
        <position position="267"/>
    </location>
    <ligand>
        <name>UDP</name>
        <dbReference type="ChEBI" id="CHEBI:58223"/>
    </ligand>
</feature>
<feature type="binding site" evidence="2">
    <location>
        <position position="267"/>
    </location>
    <ligand>
        <name>UDP-alpha-D-glucose</name>
        <dbReference type="ChEBI" id="CHEBI:58885"/>
    </ligand>
</feature>
<feature type="binding site" evidence="2">
    <location>
        <position position="300"/>
    </location>
    <ligand>
        <name>D-glucose 6-phosphate</name>
        <dbReference type="ChEBI" id="CHEBI:61548"/>
    </ligand>
</feature>
<feature type="binding site" evidence="2">
    <location>
        <begin position="361"/>
        <end position="369"/>
    </location>
    <ligand>
        <name>UDP-alpha-D-glucose</name>
        <dbReference type="ChEBI" id="CHEBI:58885"/>
    </ligand>
</feature>
<feature type="binding site" evidence="2">
    <location>
        <begin position="365"/>
        <end position="369"/>
    </location>
    <ligand>
        <name>UDP</name>
        <dbReference type="ChEBI" id="CHEBI:58223"/>
    </ligand>
</feature>
<accession>Q8SSL2</accession>